<protein>
    <recommendedName>
        <fullName>Dynein alpha chain, flagellar outer arm</fullName>
    </recommendedName>
    <alternativeName>
        <fullName>DHC alpha</fullName>
    </alternativeName>
</protein>
<comment type="function">
    <text>Force generating protein of eukaryotic cilia and flagella. Produces force towards the minus ends of microtubules. Dynein has ATPase activity; the force-producing power stroke is thought to occur on release of ADP.</text>
</comment>
<comment type="subunit">
    <text>Consists of at least 3 heavy chains (alpha, beta and gamma), 2 intermediate chains and 8 light chains.</text>
</comment>
<comment type="subcellular location">
    <subcellularLocation>
        <location>Cell projection</location>
        <location>Cilium</location>
        <location>Flagellum</location>
    </subcellularLocation>
    <subcellularLocation>
        <location>Cytoplasm</location>
        <location>Cytoskeleton</location>
        <location>Flagellum axoneme</location>
    </subcellularLocation>
</comment>
<comment type="domain">
    <text>Dynein heavy chains probably consist of an N-terminal stem (which binds cargo and interacts with other dynein components), and the head or motor domain. The motor contains six tandemly-linked AAA domains in the head, which form a ring. A stalk-like structure (formed by two of the coiled coil domains) protrudes between AAA 4 and AAA 5 and terminates in a microtubule-binding site. A seventh domain may also contribute to this ring; it is not clear whether the N-terminus or the C-terminus forms this extra domain. There are four well-conserved and two non-conserved ATPase sites, one per AAA domain. Probably only one of these (within AAA 1) actually hydrolyzes ATP, the others may serve a regulatory function.</text>
</comment>
<comment type="similarity">
    <text evidence="4">Belongs to the dynein heavy chain family.</text>
</comment>
<name>DYHA_CHLRE</name>
<reference key="1">
    <citation type="journal article" date="1997" name="Cell Motil. Cytoskeleton">
        <title>Sequence analysis of the Chlamydomonas reinhardtii flagellar alpha dynein gene.</title>
        <authorList>
            <person name="Mitchell D.R."/>
            <person name="Brown K.S."/>
        </authorList>
    </citation>
    <scope>NUCLEOTIDE SEQUENCE [GENOMIC DNA]</scope>
    <scope>SEQUENCE REVISION</scope>
    <source>
        <strain>21gr / CC-1690</strain>
    </source>
</reference>
<reference key="2">
    <citation type="journal article" date="1994" name="J. Cell Sci.">
        <title>Sequence analysis of the Chlamydomonas alpha and beta dynein heavy chain genes.</title>
        <authorList>
            <person name="Mitchell D.R."/>
            <person name="Brown K.S."/>
        </authorList>
    </citation>
    <scope>NUCLEOTIDE SEQUENCE [GENOMIC DNA] OF 1142-4499</scope>
    <source>
        <strain>21gr / CC-1690</strain>
    </source>
</reference>
<dbReference type="EMBL" id="L26049">
    <property type="protein sequence ID" value="AAA57316.2"/>
    <property type="molecule type" value="Genomic_DNA"/>
</dbReference>
<dbReference type="PIR" id="T08164">
    <property type="entry name" value="T08164"/>
</dbReference>
<dbReference type="SMR" id="Q39610"/>
<dbReference type="IntAct" id="Q39610">
    <property type="interactions" value="2"/>
</dbReference>
<dbReference type="PaxDb" id="3055-EDP01520"/>
<dbReference type="ProMEX" id="Q39610"/>
<dbReference type="eggNOG" id="KOG3595">
    <property type="taxonomic scope" value="Eukaryota"/>
</dbReference>
<dbReference type="eggNOG" id="KOG4152">
    <property type="taxonomic scope" value="Eukaryota"/>
</dbReference>
<dbReference type="GO" id="GO:0005737">
    <property type="term" value="C:cytoplasm"/>
    <property type="evidence" value="ECO:0007669"/>
    <property type="project" value="UniProtKB-KW"/>
</dbReference>
<dbReference type="GO" id="GO:0030286">
    <property type="term" value="C:dynein complex"/>
    <property type="evidence" value="ECO:0007669"/>
    <property type="project" value="UniProtKB-KW"/>
</dbReference>
<dbReference type="GO" id="GO:0005874">
    <property type="term" value="C:microtubule"/>
    <property type="evidence" value="ECO:0007669"/>
    <property type="project" value="UniProtKB-KW"/>
</dbReference>
<dbReference type="GO" id="GO:0031514">
    <property type="term" value="C:motile cilium"/>
    <property type="evidence" value="ECO:0007669"/>
    <property type="project" value="UniProtKB-SubCell"/>
</dbReference>
<dbReference type="GO" id="GO:0005524">
    <property type="term" value="F:ATP binding"/>
    <property type="evidence" value="ECO:0007669"/>
    <property type="project" value="UniProtKB-KW"/>
</dbReference>
<dbReference type="GO" id="GO:0016887">
    <property type="term" value="F:ATP hydrolysis activity"/>
    <property type="evidence" value="ECO:0007669"/>
    <property type="project" value="InterPro"/>
</dbReference>
<dbReference type="GO" id="GO:0045505">
    <property type="term" value="F:dynein intermediate chain binding"/>
    <property type="evidence" value="ECO:0007669"/>
    <property type="project" value="InterPro"/>
</dbReference>
<dbReference type="GO" id="GO:0051959">
    <property type="term" value="F:dynein light intermediate chain binding"/>
    <property type="evidence" value="ECO:0007669"/>
    <property type="project" value="InterPro"/>
</dbReference>
<dbReference type="GO" id="GO:0008569">
    <property type="term" value="F:minus-end-directed microtubule motor activity"/>
    <property type="evidence" value="ECO:0007669"/>
    <property type="project" value="InterPro"/>
</dbReference>
<dbReference type="GO" id="GO:0030030">
    <property type="term" value="P:cell projection organization"/>
    <property type="evidence" value="ECO:0007669"/>
    <property type="project" value="UniProtKB-KW"/>
</dbReference>
<dbReference type="GO" id="GO:0007018">
    <property type="term" value="P:microtubule-based movement"/>
    <property type="evidence" value="ECO:0007669"/>
    <property type="project" value="InterPro"/>
</dbReference>
<dbReference type="CDD" id="cd00102">
    <property type="entry name" value="IPT"/>
    <property type="match status" value="1"/>
</dbReference>
<dbReference type="FunFam" id="1.10.287.2620:FF:000001">
    <property type="entry name" value="Cytoplasmic dynein heavy chain 1"/>
    <property type="match status" value="1"/>
</dbReference>
<dbReference type="FunFam" id="1.10.472.130:FF:000044">
    <property type="entry name" value="Dynein alpha chain, flagellar outer arm"/>
    <property type="match status" value="1"/>
</dbReference>
<dbReference type="FunFam" id="1.10.8.720:FF:000040">
    <property type="entry name" value="Dynein alpha chain, flagellar outer arm"/>
    <property type="match status" value="1"/>
</dbReference>
<dbReference type="FunFam" id="1.20.1270.280:FF:000026">
    <property type="entry name" value="Dynein alpha chain, flagellar outer arm"/>
    <property type="match status" value="1"/>
</dbReference>
<dbReference type="FunFam" id="1.20.140.100:FF:000027">
    <property type="entry name" value="Dynein alpha chain, flagellar outer arm"/>
    <property type="match status" value="1"/>
</dbReference>
<dbReference type="FunFam" id="1.20.920.30:FF:000007">
    <property type="entry name" value="Dynein axonemal heavy chain 10"/>
    <property type="match status" value="1"/>
</dbReference>
<dbReference type="FunFam" id="1.20.920.20:FF:000003">
    <property type="entry name" value="Dynein axonemal heavy chain 17"/>
    <property type="match status" value="1"/>
</dbReference>
<dbReference type="FunFam" id="3.40.50.300:FF:002141">
    <property type="entry name" value="Dynein heavy chain"/>
    <property type="match status" value="1"/>
</dbReference>
<dbReference type="FunFam" id="1.20.58.1120:FF:000001">
    <property type="entry name" value="dynein heavy chain 2, axonemal"/>
    <property type="match status" value="1"/>
</dbReference>
<dbReference type="FunFam" id="3.40.50.300:FF:000738">
    <property type="entry name" value="Dynein heavy chain axonemal"/>
    <property type="match status" value="1"/>
</dbReference>
<dbReference type="FunFam" id="3.40.50.300:FF:001275">
    <property type="entry name" value="Dynein heavy chain, putative"/>
    <property type="match status" value="1"/>
</dbReference>
<dbReference type="FunFam" id="3.10.490.20:FF:000013">
    <property type="entry name" value="Dynein, axonemal, heavy chain 11"/>
    <property type="match status" value="1"/>
</dbReference>
<dbReference type="FunFam" id="3.40.50.300:FF:000049">
    <property type="entry name" value="Dynein, axonemal, heavy chain 5"/>
    <property type="match status" value="1"/>
</dbReference>
<dbReference type="FunFam" id="2.120.10.80:FF:000216">
    <property type="entry name" value="Flagellar outer dynein arm heavy chain alpha"/>
    <property type="match status" value="1"/>
</dbReference>
<dbReference type="FunFam" id="1.10.8.710:FF:000007">
    <property type="entry name" value="Putative dynein heavy chain"/>
    <property type="match status" value="1"/>
</dbReference>
<dbReference type="Gene3D" id="1.10.287.2620">
    <property type="match status" value="1"/>
</dbReference>
<dbReference type="Gene3D" id="1.10.472.130">
    <property type="match status" value="1"/>
</dbReference>
<dbReference type="Gene3D" id="1.10.8.1220">
    <property type="match status" value="1"/>
</dbReference>
<dbReference type="Gene3D" id="1.10.8.710">
    <property type="match status" value="1"/>
</dbReference>
<dbReference type="Gene3D" id="1.20.1270.280">
    <property type="match status" value="1"/>
</dbReference>
<dbReference type="Gene3D" id="1.20.58.1120">
    <property type="match status" value="1"/>
</dbReference>
<dbReference type="Gene3D" id="1.20.920.20">
    <property type="match status" value="1"/>
</dbReference>
<dbReference type="Gene3D" id="1.20.920.30">
    <property type="match status" value="1"/>
</dbReference>
<dbReference type="Gene3D" id="3.10.490.20">
    <property type="match status" value="1"/>
</dbReference>
<dbReference type="Gene3D" id="6.10.140.1060">
    <property type="match status" value="1"/>
</dbReference>
<dbReference type="Gene3D" id="1.20.140.100">
    <property type="entry name" value="Dynein heavy chain, N-terminal domain 2"/>
    <property type="match status" value="1"/>
</dbReference>
<dbReference type="Gene3D" id="3.20.180.20">
    <property type="entry name" value="Dynein heavy chain, N-terminal domain 2"/>
    <property type="match status" value="1"/>
</dbReference>
<dbReference type="Gene3D" id="2.60.40.10">
    <property type="entry name" value="Immunoglobulins"/>
    <property type="match status" value="2"/>
</dbReference>
<dbReference type="Gene3D" id="2.120.10.80">
    <property type="entry name" value="Kelch-type beta propeller"/>
    <property type="match status" value="4"/>
</dbReference>
<dbReference type="Gene3D" id="3.40.50.300">
    <property type="entry name" value="P-loop containing nucleotide triphosphate hydrolases"/>
    <property type="match status" value="5"/>
</dbReference>
<dbReference type="Gene3D" id="1.10.8.720">
    <property type="entry name" value="Region D6 of dynein motor"/>
    <property type="match status" value="1"/>
</dbReference>
<dbReference type="InterPro" id="IPR003593">
    <property type="entry name" value="AAA+_ATPase"/>
</dbReference>
<dbReference type="InterPro" id="IPR035699">
    <property type="entry name" value="AAA_6"/>
</dbReference>
<dbReference type="InterPro" id="IPR035706">
    <property type="entry name" value="AAA_9"/>
</dbReference>
<dbReference type="InterPro" id="IPR041658">
    <property type="entry name" value="AAA_lid_11"/>
</dbReference>
<dbReference type="InterPro" id="IPR042219">
    <property type="entry name" value="AAA_lid_11_sf"/>
</dbReference>
<dbReference type="InterPro" id="IPR026983">
    <property type="entry name" value="DHC"/>
</dbReference>
<dbReference type="InterPro" id="IPR041589">
    <property type="entry name" value="DNAH3_AAA_lid_1"/>
</dbReference>
<dbReference type="InterPro" id="IPR042222">
    <property type="entry name" value="Dynein_2_N"/>
</dbReference>
<dbReference type="InterPro" id="IPR043157">
    <property type="entry name" value="Dynein_AAA1S"/>
</dbReference>
<dbReference type="InterPro" id="IPR041466">
    <property type="entry name" value="Dynein_AAA5_ext"/>
</dbReference>
<dbReference type="InterPro" id="IPR041228">
    <property type="entry name" value="Dynein_C"/>
</dbReference>
<dbReference type="InterPro" id="IPR043160">
    <property type="entry name" value="Dynein_C_barrel"/>
</dbReference>
<dbReference type="InterPro" id="IPR024743">
    <property type="entry name" value="Dynein_HC_stalk"/>
</dbReference>
<dbReference type="InterPro" id="IPR024317">
    <property type="entry name" value="Dynein_heavy_chain_D4_dom"/>
</dbReference>
<dbReference type="InterPro" id="IPR004273">
    <property type="entry name" value="Dynein_heavy_D6_P-loop"/>
</dbReference>
<dbReference type="InterPro" id="IPR013602">
    <property type="entry name" value="Dynein_heavy_linker"/>
</dbReference>
<dbReference type="InterPro" id="IPR042228">
    <property type="entry name" value="Dynein_linker_3"/>
</dbReference>
<dbReference type="InterPro" id="IPR017868">
    <property type="entry name" value="Filamin/ABP280_repeat-like"/>
</dbReference>
<dbReference type="InterPro" id="IPR001298">
    <property type="entry name" value="Filamin/ABP280_rpt"/>
</dbReference>
<dbReference type="InterPro" id="IPR011043">
    <property type="entry name" value="Gal_Oxase/kelch_b-propeller"/>
</dbReference>
<dbReference type="InterPro" id="IPR013783">
    <property type="entry name" value="Ig-like_fold"/>
</dbReference>
<dbReference type="InterPro" id="IPR014756">
    <property type="entry name" value="Ig_E-set"/>
</dbReference>
<dbReference type="InterPro" id="IPR002909">
    <property type="entry name" value="IPT_dom"/>
</dbReference>
<dbReference type="InterPro" id="IPR015915">
    <property type="entry name" value="Kelch-typ_b-propeller"/>
</dbReference>
<dbReference type="InterPro" id="IPR011498">
    <property type="entry name" value="Kelch_2"/>
</dbReference>
<dbReference type="InterPro" id="IPR027417">
    <property type="entry name" value="P-loop_NTPase"/>
</dbReference>
<dbReference type="InterPro" id="IPR001736">
    <property type="entry name" value="PLipase_D/transphosphatidylase"/>
</dbReference>
<dbReference type="PANTHER" id="PTHR45703">
    <property type="entry name" value="DYNEIN HEAVY CHAIN"/>
    <property type="match status" value="1"/>
</dbReference>
<dbReference type="PANTHER" id="PTHR45703:SF8">
    <property type="entry name" value="DYNEINS HEAVY CHAIN"/>
    <property type="match status" value="1"/>
</dbReference>
<dbReference type="Pfam" id="PF12774">
    <property type="entry name" value="AAA_6"/>
    <property type="match status" value="1"/>
</dbReference>
<dbReference type="Pfam" id="PF12775">
    <property type="entry name" value="AAA_7"/>
    <property type="match status" value="1"/>
</dbReference>
<dbReference type="Pfam" id="PF12780">
    <property type="entry name" value="AAA_8"/>
    <property type="match status" value="1"/>
</dbReference>
<dbReference type="Pfam" id="PF12781">
    <property type="entry name" value="AAA_9"/>
    <property type="match status" value="1"/>
</dbReference>
<dbReference type="Pfam" id="PF17857">
    <property type="entry name" value="AAA_lid_1"/>
    <property type="match status" value="1"/>
</dbReference>
<dbReference type="Pfam" id="PF18198">
    <property type="entry name" value="AAA_lid_11"/>
    <property type="match status" value="1"/>
</dbReference>
<dbReference type="Pfam" id="PF08393">
    <property type="entry name" value="DHC_N2"/>
    <property type="match status" value="1"/>
</dbReference>
<dbReference type="Pfam" id="PF17852">
    <property type="entry name" value="Dynein_AAA_lid"/>
    <property type="match status" value="1"/>
</dbReference>
<dbReference type="Pfam" id="PF18199">
    <property type="entry name" value="Dynein_C"/>
    <property type="match status" value="1"/>
</dbReference>
<dbReference type="Pfam" id="PF03028">
    <property type="entry name" value="Dynein_heavy"/>
    <property type="match status" value="1"/>
</dbReference>
<dbReference type="Pfam" id="PF00630">
    <property type="entry name" value="Filamin"/>
    <property type="match status" value="1"/>
</dbReference>
<dbReference type="Pfam" id="PF07646">
    <property type="entry name" value="Kelch_2"/>
    <property type="match status" value="1"/>
</dbReference>
<dbReference type="Pfam" id="PF13418">
    <property type="entry name" value="Kelch_4"/>
    <property type="match status" value="1"/>
</dbReference>
<dbReference type="Pfam" id="PF24681">
    <property type="entry name" value="Kelch_KLHDC2_KLHL20_DRC7"/>
    <property type="match status" value="2"/>
</dbReference>
<dbReference type="Pfam" id="PF12777">
    <property type="entry name" value="MT"/>
    <property type="match status" value="1"/>
</dbReference>
<dbReference type="Pfam" id="PF01833">
    <property type="entry name" value="TIG"/>
    <property type="match status" value="1"/>
</dbReference>
<dbReference type="SMART" id="SM00382">
    <property type="entry name" value="AAA"/>
    <property type="match status" value="3"/>
</dbReference>
<dbReference type="SMART" id="SM00557">
    <property type="entry name" value="IG_FLMN"/>
    <property type="match status" value="1"/>
</dbReference>
<dbReference type="SUPFAM" id="SSF81296">
    <property type="entry name" value="E set domains"/>
    <property type="match status" value="2"/>
</dbReference>
<dbReference type="SUPFAM" id="SSF50965">
    <property type="entry name" value="Galactose oxidase, central domain"/>
    <property type="match status" value="1"/>
</dbReference>
<dbReference type="SUPFAM" id="SSF117281">
    <property type="entry name" value="Kelch motif"/>
    <property type="match status" value="2"/>
</dbReference>
<dbReference type="SUPFAM" id="SSF52540">
    <property type="entry name" value="P-loop containing nucleoside triphosphate hydrolases"/>
    <property type="match status" value="4"/>
</dbReference>
<dbReference type="PROSITE" id="PS50194">
    <property type="entry name" value="FILAMIN_REPEAT"/>
    <property type="match status" value="1"/>
</dbReference>
<organism>
    <name type="scientific">Chlamydomonas reinhardtii</name>
    <name type="common">Chlamydomonas smithii</name>
    <dbReference type="NCBI Taxonomy" id="3055"/>
    <lineage>
        <taxon>Eukaryota</taxon>
        <taxon>Viridiplantae</taxon>
        <taxon>Chlorophyta</taxon>
        <taxon>core chlorophytes</taxon>
        <taxon>Chlorophyceae</taxon>
        <taxon>CS clade</taxon>
        <taxon>Chlamydomonadales</taxon>
        <taxon>Chlamydomonadaceae</taxon>
        <taxon>Chlamydomonas</taxon>
    </lineage>
</organism>
<sequence>MSIFWEVPNAQGEAPCPRSGHSFTVLGERFVLFGGCGRKDGKAAAFNDLYELDTSDPDEYKWKELVVANAPPPRARHAAIALDDKRLLVFGGLNKRIRYNDVWLFNYDDKSWTCMEVEGAAPEPRAHFTATRFGSRVFIFGGYGGSGQVYNEMWVLHFGEDGFRWQNITESIEGTGPAPRFDHSAFIYPVTPNSDTYDKLLIMGGRDLSQMYQDSHMLDLNKMAWENETQPPTLPYEICNNVCDGIESVPYHKVFSFGGRKGMMQYLNTVEVMDCGTQMWSTPPVDHGVAPVGREDTAWVFDVKTCSLLIFGGWANRWLGDLHKLNVSPIIGPPYACTAIQPEMGPVFGSTELVIRGLRFRDGKVQVKFGLSEKNEVVVEGTYVDQETIRVQTPNYEQFGALTVDVRVSINGEGWTVNKIKYAYFANTAARNCIAYGPGLLAETISGVEVPFIIQAKDTLNDKRTSGGDVFKVTVVSADGKNEGVSRVRDLQNGQYEVQYAAPTAGPYLIHVAFNELGTSDFVPIRGSPFTVKCTDSWTKHRVMGAAPAKRKGATICTMGNELVLYGGDKSGVTVLNTEGAEWRWSPATVSGSTPPDRTAHSTVVLSDGELVVFGGINLADQNDLNDIYYLRKQGEGWVWSCPSESRPYIRHPKGAAAVSAEPSAEPAAEPAAEPAAEPDADAPAAEPAAEGEEGAVPAEGEEGAEGATGSRPVSAKPAPAAAAPAAEALPELPVSARNSHVAVAIDKDLYVMMGDHDGDLMTELAMVDTSDRTCAHWLEPILKGDVPVPRKACAAAATGNTIVLFGGQTQNADGEATVTGDLVIMEVTGPNSIQCAVNPAAPGASGSPAARYGAVMQEFSNGKLFLHGGMDAASKPLNDGWLFDVPSKTWQCVYVGSSDVVLPTGQLATLSGNRIVLVSAAVGSPKLDSVQSLDFQELRDQAGVHAKMRASTETLLKGLEDWVDTQAHGMELARSPEKLSKDFENGLRKVMDALFQVKSQRSQTDLLIDQLHEAFAQLAEEKVPGINKMEKRLEAAAHKWDEIKKAQPQVKTDVEPIQAAKGEDIKKEIETFAAKVRNYRADFRRRGFFKYATGFDGAYPLLDAAAHELAELKKECDRLSELASVFEFPQAIEPVTVAIKETVEDLVMVKDVWDTAVLCELQFQDWRQTLWSDIRTDIMEEGAKQFVKEVKSLHKKVRDEDVFRGVDQVVKNFLVSVPLVADLRSPAMRDRHWEQLMATTKMTFNVKDPNFKLDDLLALELHKFEEEVGEIVDRAQKEEKMEIAIRKLNDTWTRVEFQFHRHKDYDVHTVKMAEEDFEALEDNQVQVQGMIANRYMATFKDEILGWQKKLNDVADVNQIMAEIQRTWAYLESLFIHSEEVKKELPQATERFAAIDTEVKKVLREFQQLKNCVSCCNREGLYANLETQERELEICKKALNDYMESKRRAFPRFYFVSSADLLDILSNGNNPMRVQIHMNKCFQAIDNVRLDSEEVVPGRRPKALGMESCVGIEYVPFSSLPLENKVEQYMNDIIAKMRNDVRMVLKASVEDYPSKPRDKWLFDWPSQIILVVNQIYWCLEVEQAFTEMARGDKGAMSKYNEFQVKQLTKLIEVTRTDLSKPDRQKIMNMITIDAHSRDMVLAGADQPDSFQWVSQLRSYWDRDISDCRIRICDASFPYGYEYLGNGPRLVITPLTDRIYITATQACWLSLGTAPAGPAGTGKTETTKDLSAQLGKSVYVFNCSPEMDYRTMGDIFKGLAASGSWGCFDEFNRLVPEVLSVCSVQYKCVTDSQKKKTMLPGRGLEYIKDGVKHPAVEHWSFIAADGVEMPLEEGTSAFITMNPGYIGRAELPESLKALFRPITVMVPDRQLIMENMLMAEGFVEAKMLAKKFASLYYLLEDLLSPQKHYDWGLRAIKSVLVVAGSLLRAEAGQVEADVLFRALRDFNIPKILAQDMVIFMGLLNDLFPGIDPPRKRDMEFEDVIVSTIKDLGLTPEDDFVLRVVQFSELLAIRHCVFLMGPTGTGRTECYRVLAKAITKGCNNPVNDYLKMTNKKKVVIRDINPKSISTYELYGQVNQATREWKDGLLSYYMRDVANMPGDDPKWLLLDGDLDANWIESMNSVMDDNRLLTLPSNERIRVLPHMKLIFEIRDLKFATPATATRAGILYISEGQQWHNMAMSWINRVVKPYAERAKWKDPQLPCTWLREMFDKYIPPTLLEMKKSYSHITPLAQMNFISTLVNIMEGVLKPENLSNKADQAMFEMYFVFAMIWAFGGGLVEKDGIPYRRNFDKWFKQTWTTVKIPGKGTVYDYFVNPKTQKFQPWAELVTDIDYDGSRPMSTVFVPTAETSSLRFFLDMMVDLRKPIMFVGGAGVGKTQLVKGKLGSLNEEQISLSISFNYFTDVVSFQKVLESPLEKQPAGINYGPPGTKQLIYFVDDLNMPKLDLYETAMPISLIRQHLGWGHWFDRAKLTPKNINNTQYVACMNPTAGSFIINPRLQRLFMTLAVDFPGQDSLMKIYGTFLQGHLKKFSESIQDMGTKILQAALALHDRVSQTFRKTAINFHYEFTVRHLANVFQGLLMSTPEAFNSPTKWGKLWLHESERVYADRLVSLYDLDAYNKAATAIAKKYFSVADIDDYYKKKDPKPLIFCHFARGLADKAYDEVADYTSLYKTLTEALNEYNETNAAMDLVLFEDAMKHVCRISRIVSNPSGHALLVGVGGSGKQSLARLAAHICGYATQMIVISGSYSMNNFKEDIQKMYKRTGVKGEGVMFLFTDSQIVDERMLVYINDLLSSGEIPDLFPQEDRDEIVNALRSETKSLGLLDTAENCWATFIQKVKTNLHMVFTASPVGENFRVRSQRFLATVTSTVIDWFQPWPESSLFSVAKRFLDEVDLGEDAVANAVVEFMPYSFQLVNKVSIKFREQERRYNYTTPKTFLELIKLYKNVLAAKRKANQDNTERLENGLHKLHKVQADVDILVEEAKVKAVEVEHKVASANIFAEQVGVEKEKVNAENAAAQVEAEKCAVIAKEVSEKQASCEKDLAAAEPLVAEAMAALETVTKKDLGEAKSLKKPPPGVDDITAVVIILLENNPKDKSWQAAQKLMNNVDKFLERVKSFKSVIDAGQVARKTVDACRPYLALEWFNREAIGKKSAAAAGLCEWAVNIIKYYDVVQEVEPKRQELAAANAKLEEANVTLAAVEEKVALLNAKVQELEQQYKEANDDKEAAIRESERCQRKLELANRLINALASEGERWALTVEQLRKSYEVLTGDMLLAAAFVSYAGPFTAKFRAHVIDDWILFLRERHMPMTEGITDPLKVLVDDALVAGWIREGLPSDPTSVQNGTILTNSERWSLMMDPQLQGILWIKERESKNNLQVTRMGASNMLQVMERAIEAGHSVLVENMGETIDAVLNPIITRSTFKKGRSLYVKLGDKECEYNKNFRLFLHTKLSNPHYPPEIQAETTLINFTVTEAGLEDQLLALVVNKERPDLEETKTQLIIQNTEFTIKLKELEDGLLLKLSTAEGDITEDVALIESLEDAKRVSTEISEKVKESRETEAAINENRNKYRTVAARGAMLFFLLNSLNKIHAFYQFSLNAFVTVFSRGLDLAPGGRKKGKGLKKTPSLRDQPMDHQSLMEKARRSSGVGDRRPSQEGLPGPEASQASLAESQGGRGSQVGDAEDEDDESFAMAPEALEQRLVNLLETCTFTVYNYTRRGLFDRDKLIVLSLLTFTILLRSQAVDASEYEALCRGMRNPTPPPITDDLSRWMAESQWAALDVLTTLPCFAHLAKDMEKNSDDWFNWCNNEAAERAPMPGEWGKLTEFRQLLIIRALRPDRITNALQNFCEHMMGSDYVNQDAFSPAAMMDESSSATPIFFILFPGYSPSKEIEVYANKCGYSVANGRLCLISMGQGQEAPAEAVLDKYTREGGWVFLDNVHLMQGWIPKLERKLEIAAESAHPDFRCFFSAEPINGAPHANIIPESILQTCIKISNEPPSDMKSNMRRAFAAFTPEQCDRPSTPAKRVAFRAILFGLCFYHSLLLGRKKFGVGIGTGSGSGLGFCRGYSFNIGDLTTCGDVLYNYLEAYEQIPWRDLQYMFGEVFYGGHITDSMDRRCCTTYLEVLIRNEILPKGNPDEVEAWEAPTLELAPGFFAPKPVDYPTLKEYIETSLPAESPVVYGMHPNAELSLLTSLGETLFKTVVEVAGGGGGGGGGGGGGENAVRQALETFKERLPEPFNMVEVELRVKEKTPFVVVALQEATRMNALLSEMKRSMEELQLGLDGALNMSDNMEKLAKGIASNTVPELWMSCMSTRVQEVYTLTAWYQDVVKRHDQLSAWTAGDIITPHSVWLPGLFNPKAFLTAVMQTFARANKLPLDVMKFMTEVTRMTSPEQVTEAAPLGVYVHGLVLEGARWDREDGCLRDSKPNELHPAMPVLQVKPVTADQFNLEGYYECPVYTNMQRANVYSPVVSTFTLRTQDMPAKWVLASVALLLQDDLAG</sequence>
<proteinExistence type="inferred from homology"/>
<gene>
    <name type="primary">ODA11</name>
    <name type="synonym">ODA-11</name>
</gene>
<keyword id="KW-0067">ATP-binding</keyword>
<keyword id="KW-0966">Cell projection</keyword>
<keyword id="KW-0969">Cilium</keyword>
<keyword id="KW-0970">Cilium biogenesis/degradation</keyword>
<keyword id="KW-0175">Coiled coil</keyword>
<keyword id="KW-0963">Cytoplasm</keyword>
<keyword id="KW-0206">Cytoskeleton</keyword>
<keyword id="KW-0243">Dynein</keyword>
<keyword id="KW-0282">Flagellum</keyword>
<keyword id="KW-0880">Kelch repeat</keyword>
<keyword id="KW-0493">Microtubule</keyword>
<keyword id="KW-0505">Motor protein</keyword>
<keyword id="KW-0547">Nucleotide-binding</keyword>
<keyword id="KW-0677">Repeat</keyword>
<evidence type="ECO:0000250" key="1"/>
<evidence type="ECO:0000255" key="2"/>
<evidence type="ECO:0000256" key="3">
    <source>
        <dbReference type="SAM" id="MobiDB-lite"/>
    </source>
</evidence>
<evidence type="ECO:0000305" key="4"/>
<feature type="chain" id="PRO_0000114648" description="Dynein alpha chain, flagellar outer arm">
    <location>
        <begin position="1"/>
        <end position="4499"/>
    </location>
</feature>
<feature type="repeat" description="Kelch 1">
    <location>
        <begin position="29"/>
        <end position="84"/>
    </location>
</feature>
<feature type="repeat" description="Kelch 2">
    <location>
        <begin position="86"/>
        <end position="135"/>
    </location>
</feature>
<feature type="repeat" description="Kelch 3">
    <location>
        <begin position="137"/>
        <end position="183"/>
    </location>
</feature>
<feature type="repeat" description="Kelch 4">
    <location>
        <begin position="199"/>
        <end position="245"/>
    </location>
</feature>
<feature type="repeat" description="Kelch 5">
    <location>
        <begin position="253"/>
        <end position="304"/>
    </location>
</feature>
<feature type="repeat" description="Kelch 6">
    <location>
        <begin position="307"/>
        <end position="358"/>
    </location>
</feature>
<feature type="repeat" description="Filamin">
    <location>
        <begin position="425"/>
        <end position="534"/>
    </location>
</feature>
<feature type="repeat" description="Kelch 7">
    <location>
        <begin position="562"/>
        <end position="608"/>
    </location>
</feature>
<feature type="repeat" description="Kelch 8">
    <location>
        <begin position="610"/>
        <end position="661"/>
    </location>
</feature>
<feature type="repeat" description="Kelch 9">
    <location>
        <begin position="750"/>
        <end position="801"/>
    </location>
</feature>
<feature type="repeat" description="Kelch 10">
    <location>
        <begin position="864"/>
        <end position="913"/>
    </location>
</feature>
<feature type="repeat" description="Kelch 11">
    <location>
        <begin position="2269"/>
        <end position="2317"/>
    </location>
</feature>
<feature type="repeat" description="Kelch 12">
    <location>
        <begin position="3070"/>
        <end position="3117"/>
    </location>
</feature>
<feature type="region of interest" description="Stem" evidence="1">
    <location>
        <begin position="1"/>
        <end position="1677"/>
    </location>
</feature>
<feature type="region of interest" description="Disordered" evidence="3">
    <location>
        <begin position="653"/>
        <end position="720"/>
    </location>
</feature>
<feature type="region of interest" description="AAA 1" evidence="1">
    <location>
        <begin position="1678"/>
        <end position="1921"/>
    </location>
</feature>
<feature type="region of interest" description="AAA 2" evidence="1">
    <location>
        <begin position="1981"/>
        <end position="2225"/>
    </location>
</feature>
<feature type="region of interest" description="AAA 3" evidence="1">
    <location>
        <begin position="2331"/>
        <end position="2577"/>
    </location>
</feature>
<feature type="region of interest" description="AAA 4" evidence="1">
    <location>
        <begin position="2679"/>
        <end position="2928"/>
    </location>
</feature>
<feature type="region of interest" description="Stalk" evidence="1">
    <location>
        <begin position="3003"/>
        <end position="3262"/>
    </location>
</feature>
<feature type="region of interest" description="AAA 5" evidence="1">
    <location>
        <begin position="3320"/>
        <end position="3550"/>
    </location>
</feature>
<feature type="region of interest" description="Disordered" evidence="3">
    <location>
        <begin position="3614"/>
        <end position="3687"/>
    </location>
</feature>
<feature type="region of interest" description="AAA 6" evidence="1">
    <location>
        <begin position="3843"/>
        <end position="4082"/>
    </location>
</feature>
<feature type="coiled-coil region" evidence="2">
    <location>
        <begin position="1261"/>
        <end position="1334"/>
    </location>
</feature>
<feature type="coiled-coil region" evidence="2">
    <location>
        <begin position="1382"/>
        <end position="1450"/>
    </location>
</feature>
<feature type="coiled-coil region" evidence="2">
    <location>
        <begin position="2655"/>
        <end position="2688"/>
    </location>
</feature>
<feature type="coiled-coil region" evidence="2">
    <location>
        <begin position="3003"/>
        <end position="3023"/>
    </location>
</feature>
<feature type="coiled-coil region" evidence="2">
    <location>
        <begin position="3170"/>
        <end position="3262"/>
    </location>
</feature>
<feature type="coiled-coil region" evidence="2">
    <location>
        <begin position="3486"/>
        <end position="3515"/>
    </location>
</feature>
<feature type="compositionally biased region" description="Low complexity" evidence="3">
    <location>
        <begin position="655"/>
        <end position="689"/>
    </location>
</feature>
<feature type="compositionally biased region" description="Acidic residues" evidence="3">
    <location>
        <begin position="690"/>
        <end position="705"/>
    </location>
</feature>
<feature type="compositionally biased region" description="Basic and acidic residues" evidence="3">
    <location>
        <begin position="3630"/>
        <end position="3653"/>
    </location>
</feature>
<feature type="binding site" evidence="2">
    <location>
        <begin position="1716"/>
        <end position="1723"/>
    </location>
    <ligand>
        <name>ATP</name>
        <dbReference type="ChEBI" id="CHEBI:30616"/>
    </ligand>
</feature>
<feature type="binding site" evidence="2">
    <location>
        <begin position="2019"/>
        <end position="2026"/>
    </location>
    <ligand>
        <name>ATP</name>
        <dbReference type="ChEBI" id="CHEBI:30616"/>
    </ligand>
</feature>
<feature type="binding site" evidence="2">
    <location>
        <begin position="2369"/>
        <end position="2376"/>
    </location>
    <ligand>
        <name>ATP</name>
        <dbReference type="ChEBI" id="CHEBI:30616"/>
    </ligand>
</feature>
<feature type="binding site" evidence="2">
    <location>
        <begin position="2717"/>
        <end position="2724"/>
    </location>
    <ligand>
        <name>ATP</name>
        <dbReference type="ChEBI" id="CHEBI:30616"/>
    </ligand>
</feature>
<accession>Q39610</accession>